<dbReference type="EC" id="1.1.1.42" evidence="3"/>
<dbReference type="EMBL" id="AL123456">
    <property type="protein sequence ID" value="CCP42789.1"/>
    <property type="molecule type" value="Genomic_DNA"/>
</dbReference>
<dbReference type="RefSeq" id="NP_214580.1">
    <property type="nucleotide sequence ID" value="NC_000962.3"/>
</dbReference>
<dbReference type="RefSeq" id="WP_003899797.1">
    <property type="nucleotide sequence ID" value="NZ_NVQJ01000005.1"/>
</dbReference>
<dbReference type="PDB" id="5KVU">
    <property type="method" value="X-ray"/>
    <property type="resolution" value="2.66 A"/>
    <property type="chains" value="A/B/C/D=1-745"/>
</dbReference>
<dbReference type="PDBsum" id="5KVU"/>
<dbReference type="SMR" id="O53611"/>
<dbReference type="FunCoup" id="O53611">
    <property type="interactions" value="183"/>
</dbReference>
<dbReference type="STRING" id="83332.Rv0066c"/>
<dbReference type="PaxDb" id="83332-Rv0066c"/>
<dbReference type="DNASU" id="887016"/>
<dbReference type="GeneID" id="887016"/>
<dbReference type="KEGG" id="mtu:Rv0066c"/>
<dbReference type="KEGG" id="mtv:RVBD_0066c"/>
<dbReference type="PATRIC" id="fig|83332.111.peg.76"/>
<dbReference type="TubercuList" id="Rv0066c"/>
<dbReference type="eggNOG" id="COG2838">
    <property type="taxonomic scope" value="Bacteria"/>
</dbReference>
<dbReference type="InParanoid" id="O53611"/>
<dbReference type="OrthoDB" id="9807643at2"/>
<dbReference type="PhylomeDB" id="O53611"/>
<dbReference type="BRENDA" id="1.1.1.42">
    <property type="organism ID" value="3445"/>
</dbReference>
<dbReference type="Proteomes" id="UP000001584">
    <property type="component" value="Chromosome"/>
</dbReference>
<dbReference type="GO" id="GO:0005829">
    <property type="term" value="C:cytosol"/>
    <property type="evidence" value="ECO:0007005"/>
    <property type="project" value="MTBBASE"/>
</dbReference>
<dbReference type="GO" id="GO:0005576">
    <property type="term" value="C:extracellular region"/>
    <property type="evidence" value="ECO:0007005"/>
    <property type="project" value="MTBBASE"/>
</dbReference>
<dbReference type="GO" id="GO:0009274">
    <property type="term" value="C:peptidoglycan-based cell wall"/>
    <property type="evidence" value="ECO:0007005"/>
    <property type="project" value="MTBBASE"/>
</dbReference>
<dbReference type="GO" id="GO:0005886">
    <property type="term" value="C:plasma membrane"/>
    <property type="evidence" value="ECO:0007005"/>
    <property type="project" value="MTBBASE"/>
</dbReference>
<dbReference type="GO" id="GO:0004450">
    <property type="term" value="F:isocitrate dehydrogenase (NADP+) activity"/>
    <property type="evidence" value="ECO:0000314"/>
    <property type="project" value="MTBBASE"/>
</dbReference>
<dbReference type="GO" id="GO:0000287">
    <property type="term" value="F:magnesium ion binding"/>
    <property type="evidence" value="ECO:0000314"/>
    <property type="project" value="MTBBASE"/>
</dbReference>
<dbReference type="GO" id="GO:0042803">
    <property type="term" value="F:protein homodimerization activity"/>
    <property type="evidence" value="ECO:0000353"/>
    <property type="project" value="MTBBASE"/>
</dbReference>
<dbReference type="GO" id="GO:0006097">
    <property type="term" value="P:glyoxylate cycle"/>
    <property type="evidence" value="ECO:0000314"/>
    <property type="project" value="MTBBASE"/>
</dbReference>
<dbReference type="GO" id="GO:0006102">
    <property type="term" value="P:isocitrate metabolic process"/>
    <property type="evidence" value="ECO:0000314"/>
    <property type="project" value="MTBBASE"/>
</dbReference>
<dbReference type="GO" id="GO:0006099">
    <property type="term" value="P:tricarboxylic acid cycle"/>
    <property type="evidence" value="ECO:0000314"/>
    <property type="project" value="MTBBASE"/>
</dbReference>
<dbReference type="InterPro" id="IPR004436">
    <property type="entry name" value="Isocitrate_DH_NADP_mono"/>
</dbReference>
<dbReference type="NCBIfam" id="TIGR00178">
    <property type="entry name" value="monomer_idh"/>
    <property type="match status" value="1"/>
</dbReference>
<dbReference type="PANTHER" id="PTHR36999:SF1">
    <property type="entry name" value="ISOCITRATE DEHYDROGENASE (NADP(+))"/>
    <property type="match status" value="1"/>
</dbReference>
<dbReference type="PANTHER" id="PTHR36999">
    <property type="entry name" value="ISOCITRATE DEHYDROGENASE [NADP]"/>
    <property type="match status" value="1"/>
</dbReference>
<dbReference type="Pfam" id="PF03971">
    <property type="entry name" value="IDH"/>
    <property type="match status" value="1"/>
</dbReference>
<dbReference type="PIRSF" id="PIRSF009407">
    <property type="entry name" value="IDH_monmr"/>
    <property type="match status" value="1"/>
</dbReference>
<dbReference type="SUPFAM" id="SSF53659">
    <property type="entry name" value="Isocitrate/Isopropylmalate dehydrogenase-like"/>
    <property type="match status" value="1"/>
</dbReference>
<organism>
    <name type="scientific">Mycobacterium tuberculosis (strain ATCC 25618 / H37Rv)</name>
    <dbReference type="NCBI Taxonomy" id="83332"/>
    <lineage>
        <taxon>Bacteria</taxon>
        <taxon>Bacillati</taxon>
        <taxon>Actinomycetota</taxon>
        <taxon>Actinomycetes</taxon>
        <taxon>Mycobacteriales</taxon>
        <taxon>Mycobacteriaceae</taxon>
        <taxon>Mycobacterium</taxon>
        <taxon>Mycobacterium tuberculosis complex</taxon>
    </lineage>
</organism>
<name>IDH2_MYCTU</name>
<feature type="chain" id="PRO_0000461070" description="Isocitrate dehydrogenase [NADP] 2">
    <location>
        <begin position="1"/>
        <end position="745"/>
    </location>
</feature>
<feature type="binding site" evidence="5 10">
    <location>
        <position position="87"/>
    </location>
    <ligand>
        <name>NADP(+)</name>
        <dbReference type="ChEBI" id="CHEBI:58349"/>
    </ligand>
</feature>
<feature type="binding site" evidence="5 10">
    <location>
        <position position="89"/>
    </location>
    <ligand>
        <name>NADP(+)</name>
        <dbReference type="ChEBI" id="CHEBI:58349"/>
    </ligand>
</feature>
<feature type="binding site" evidence="8 10">
    <location>
        <position position="134"/>
    </location>
    <ligand>
        <name>D-threo-isocitrate</name>
        <dbReference type="ChEBI" id="CHEBI:15562"/>
    </ligand>
</feature>
<feature type="binding site" evidence="8 10">
    <location>
        <position position="137"/>
    </location>
    <ligand>
        <name>D-threo-isocitrate</name>
        <dbReference type="ChEBI" id="CHEBI:15562"/>
    </ligand>
</feature>
<feature type="binding site" evidence="8 10">
    <location>
        <position position="141"/>
    </location>
    <ligand>
        <name>D-threo-isocitrate</name>
        <dbReference type="ChEBI" id="CHEBI:15562"/>
    </ligand>
</feature>
<feature type="binding site" evidence="1">
    <location>
        <position position="147"/>
    </location>
    <ligand>
        <name>D-threo-isocitrate</name>
        <dbReference type="ChEBI" id="CHEBI:15562"/>
    </ligand>
</feature>
<feature type="binding site" evidence="8 10">
    <location>
        <position position="257"/>
    </location>
    <ligand>
        <name>D-threo-isocitrate</name>
        <dbReference type="ChEBI" id="CHEBI:15562"/>
    </ligand>
</feature>
<feature type="binding site" evidence="2">
    <location>
        <position position="352"/>
    </location>
    <ligand>
        <name>Mg(2+)</name>
        <dbReference type="ChEBI" id="CHEBI:18420"/>
    </ligand>
</feature>
<feature type="binding site" evidence="8 10">
    <location>
        <position position="422"/>
    </location>
    <ligand>
        <name>D-threo-isocitrate</name>
        <dbReference type="ChEBI" id="CHEBI:15562"/>
    </ligand>
</feature>
<feature type="binding site" evidence="8 10">
    <location>
        <position position="550"/>
    </location>
    <ligand>
        <name>D-threo-isocitrate</name>
        <dbReference type="ChEBI" id="CHEBI:15562"/>
    </ligand>
</feature>
<feature type="binding site" evidence="2">
    <location>
        <position position="551"/>
    </location>
    <ligand>
        <name>Mg(2+)</name>
        <dbReference type="ChEBI" id="CHEBI:18420"/>
    </ligand>
</feature>
<feature type="binding site" evidence="2">
    <location>
        <position position="555"/>
    </location>
    <ligand>
        <name>Mg(2+)</name>
        <dbReference type="ChEBI" id="CHEBI:18420"/>
    </ligand>
</feature>
<feature type="binding site" evidence="5 10">
    <location>
        <position position="587"/>
    </location>
    <ligand>
        <name>NADP(+)</name>
        <dbReference type="ChEBI" id="CHEBI:58349"/>
    </ligand>
</feature>
<feature type="binding site" evidence="5 10">
    <location>
        <position position="588"/>
    </location>
    <ligand>
        <name>NADP(+)</name>
        <dbReference type="ChEBI" id="CHEBI:58349"/>
    </ligand>
</feature>
<feature type="binding site" evidence="5 10">
    <location>
        <position position="589"/>
    </location>
    <ligand>
        <name>NADP(+)</name>
        <dbReference type="ChEBI" id="CHEBI:58349"/>
    </ligand>
</feature>
<feature type="binding site" evidence="5 10">
    <location>
        <position position="592"/>
    </location>
    <ligand>
        <name>NADP(+)</name>
        <dbReference type="ChEBI" id="CHEBI:58349"/>
    </ligand>
</feature>
<feature type="binding site" evidence="5 10">
    <location>
        <position position="603"/>
    </location>
    <ligand>
        <name>NADP(+)</name>
        <dbReference type="ChEBI" id="CHEBI:58349"/>
    </ligand>
</feature>
<feature type="binding site" evidence="5 10">
    <location>
        <position position="605"/>
    </location>
    <ligand>
        <name>NADP(+)</name>
        <dbReference type="ChEBI" id="CHEBI:58349"/>
    </ligand>
</feature>
<feature type="binding site" evidence="5 10">
    <location>
        <position position="652"/>
    </location>
    <ligand>
        <name>NADP(+)</name>
        <dbReference type="ChEBI" id="CHEBI:58349"/>
    </ligand>
</feature>
<feature type="strand" evidence="11">
    <location>
        <begin position="7"/>
        <end position="12"/>
    </location>
</feature>
<feature type="helix" evidence="11">
    <location>
        <begin position="15"/>
        <end position="32"/>
    </location>
</feature>
<feature type="helix" evidence="11">
    <location>
        <begin position="33"/>
        <end position="35"/>
    </location>
</feature>
<feature type="strand" evidence="11">
    <location>
        <begin position="38"/>
        <end position="43"/>
    </location>
</feature>
<feature type="helix" evidence="11">
    <location>
        <begin position="46"/>
        <end position="53"/>
    </location>
</feature>
<feature type="helix" evidence="11">
    <location>
        <begin position="55"/>
        <end position="57"/>
    </location>
</feature>
<feature type="strand" evidence="11">
    <location>
        <begin position="60"/>
        <end position="62"/>
    </location>
</feature>
<feature type="helix" evidence="11">
    <location>
        <begin position="67"/>
        <end position="74"/>
    </location>
</feature>
<feature type="strand" evidence="11">
    <location>
        <begin position="81"/>
        <end position="84"/>
    </location>
</feature>
<feature type="helix" evidence="11">
    <location>
        <begin position="92"/>
        <end position="104"/>
    </location>
</feature>
<feature type="helix" evidence="11">
    <location>
        <begin position="120"/>
        <end position="129"/>
    </location>
</feature>
<feature type="strand" evidence="11">
    <location>
        <begin position="132"/>
        <end position="134"/>
    </location>
</feature>
<feature type="helix" evidence="11">
    <location>
        <begin position="137"/>
        <end position="140"/>
    </location>
</feature>
<feature type="strand" evidence="11">
    <location>
        <begin position="145"/>
        <end position="148"/>
    </location>
</feature>
<feature type="helix" evidence="11">
    <location>
        <begin position="151"/>
        <end position="159"/>
    </location>
</feature>
<feature type="strand" evidence="11">
    <location>
        <begin position="174"/>
        <end position="176"/>
    </location>
</feature>
<feature type="strand" evidence="11">
    <location>
        <begin position="179"/>
        <end position="182"/>
    </location>
</feature>
<feature type="helix" evidence="11">
    <location>
        <begin position="183"/>
        <end position="186"/>
    </location>
</feature>
<feature type="strand" evidence="11">
    <location>
        <begin position="188"/>
        <end position="191"/>
    </location>
</feature>
<feature type="strand" evidence="11">
    <location>
        <begin position="196"/>
        <end position="204"/>
    </location>
</feature>
<feature type="strand" evidence="11">
    <location>
        <begin position="209"/>
        <end position="218"/>
    </location>
</feature>
<feature type="strand" evidence="11">
    <location>
        <begin position="223"/>
        <end position="229"/>
    </location>
</feature>
<feature type="helix" evidence="11">
    <location>
        <begin position="231"/>
        <end position="248"/>
    </location>
</feature>
<feature type="strand" evidence="11">
    <location>
        <begin position="251"/>
        <end position="254"/>
    </location>
</feature>
<feature type="strand" evidence="11">
    <location>
        <begin position="263"/>
        <end position="265"/>
    </location>
</feature>
<feature type="helix" evidence="11">
    <location>
        <begin position="267"/>
        <end position="276"/>
    </location>
</feature>
<feature type="helix" evidence="11">
    <location>
        <begin position="278"/>
        <end position="281"/>
    </location>
</feature>
<feature type="helix" evidence="11">
    <location>
        <begin position="285"/>
        <end position="290"/>
    </location>
</feature>
<feature type="helix" evidence="11">
    <location>
        <begin position="295"/>
        <end position="297"/>
    </location>
</feature>
<feature type="helix" evidence="11">
    <location>
        <begin position="298"/>
        <end position="307"/>
    </location>
</feature>
<feature type="strand" evidence="11">
    <location>
        <begin position="311"/>
        <end position="313"/>
    </location>
</feature>
<feature type="helix" evidence="11">
    <location>
        <begin position="314"/>
        <end position="323"/>
    </location>
</feature>
<feature type="helix" evidence="11">
    <location>
        <begin position="324"/>
        <end position="326"/>
    </location>
</feature>
<feature type="strand" evidence="11">
    <location>
        <begin position="333"/>
        <end position="335"/>
    </location>
</feature>
<feature type="turn" evidence="11">
    <location>
        <begin position="336"/>
        <end position="339"/>
    </location>
</feature>
<feature type="turn" evidence="11">
    <location>
        <begin position="346"/>
        <end position="348"/>
    </location>
</feature>
<feature type="helix" evidence="11">
    <location>
        <begin position="351"/>
        <end position="360"/>
    </location>
</feature>
<feature type="strand" evidence="11">
    <location>
        <begin position="363"/>
        <end position="366"/>
    </location>
</feature>
<feature type="strand" evidence="11">
    <location>
        <begin position="372"/>
        <end position="378"/>
    </location>
</feature>
<feature type="turn" evidence="11">
    <location>
        <begin position="383"/>
        <end position="385"/>
    </location>
</feature>
<feature type="helix" evidence="11">
    <location>
        <begin position="386"/>
        <end position="398"/>
    </location>
</feature>
<feature type="turn" evidence="11">
    <location>
        <begin position="403"/>
        <end position="405"/>
    </location>
</feature>
<feature type="strand" evidence="11">
    <location>
        <begin position="411"/>
        <end position="413"/>
    </location>
</feature>
<feature type="turn" evidence="11">
    <location>
        <begin position="416"/>
        <end position="418"/>
    </location>
</feature>
<feature type="helix" evidence="11">
    <location>
        <begin position="420"/>
        <end position="423"/>
    </location>
</feature>
<feature type="helix" evidence="11">
    <location>
        <begin position="425"/>
        <end position="427"/>
    </location>
</feature>
<feature type="strand" evidence="11">
    <location>
        <begin position="428"/>
        <end position="430"/>
    </location>
</feature>
<feature type="strand" evidence="11">
    <location>
        <begin position="433"/>
        <end position="441"/>
    </location>
</feature>
<feature type="turn" evidence="11">
    <location>
        <begin position="442"/>
        <end position="444"/>
    </location>
</feature>
<feature type="strand" evidence="11">
    <location>
        <begin position="447"/>
        <end position="453"/>
    </location>
</feature>
<feature type="strand" evidence="11">
    <location>
        <begin position="458"/>
        <end position="464"/>
    </location>
</feature>
<feature type="helix" evidence="11">
    <location>
        <begin position="466"/>
        <end position="483"/>
    </location>
</feature>
<feature type="strand" evidence="11">
    <location>
        <begin position="487"/>
        <end position="490"/>
    </location>
</feature>
<feature type="helix" evidence="11">
    <location>
        <begin position="496"/>
        <end position="508"/>
    </location>
</feature>
<feature type="helix" evidence="11">
    <location>
        <begin position="509"/>
        <end position="511"/>
    </location>
</feature>
<feature type="strand" evidence="11">
    <location>
        <begin position="519"/>
        <end position="522"/>
    </location>
</feature>
<feature type="helix" evidence="11">
    <location>
        <begin position="524"/>
        <end position="535"/>
    </location>
</feature>
<feature type="turn" evidence="11">
    <location>
        <begin position="536"/>
        <end position="538"/>
    </location>
</feature>
<feature type="strand" evidence="11">
    <location>
        <begin position="542"/>
        <end position="545"/>
    </location>
</feature>
<feature type="helix" evidence="11">
    <location>
        <begin position="547"/>
        <end position="562"/>
    </location>
</feature>
<feature type="helix" evidence="11">
    <location>
        <begin position="565"/>
        <end position="567"/>
    </location>
</feature>
<feature type="strand" evidence="11">
    <location>
        <begin position="568"/>
        <end position="573"/>
    </location>
</feature>
<feature type="strand" evidence="11">
    <location>
        <begin position="579"/>
        <end position="583"/>
    </location>
</feature>
<feature type="helix" evidence="11">
    <location>
        <begin position="590"/>
        <end position="599"/>
    </location>
</feature>
<feature type="helix" evidence="11">
    <location>
        <begin position="607"/>
        <end position="624"/>
    </location>
</feature>
<feature type="helix" evidence="11">
    <location>
        <begin position="627"/>
        <end position="645"/>
    </location>
</feature>
<feature type="helix" evidence="11">
    <location>
        <begin position="659"/>
        <end position="676"/>
    </location>
</feature>
<feature type="helix" evidence="11">
    <location>
        <begin position="681"/>
        <end position="696"/>
    </location>
</feature>
<feature type="helix" evidence="11">
    <location>
        <begin position="698"/>
        <end position="707"/>
    </location>
</feature>
<feature type="strand" evidence="11">
    <location>
        <begin position="718"/>
        <end position="720"/>
    </location>
</feature>
<feature type="helix" evidence="11">
    <location>
        <begin position="723"/>
        <end position="730"/>
    </location>
</feature>
<feature type="helix" evidence="11">
    <location>
        <begin position="734"/>
        <end position="741"/>
    </location>
</feature>
<reference key="1">
    <citation type="journal article" date="1998" name="Nature">
        <title>Deciphering the biology of Mycobacterium tuberculosis from the complete genome sequence.</title>
        <authorList>
            <person name="Cole S.T."/>
            <person name="Brosch R."/>
            <person name="Parkhill J."/>
            <person name="Garnier T."/>
            <person name="Churcher C.M."/>
            <person name="Harris D.E."/>
            <person name="Gordon S.V."/>
            <person name="Eiglmeier K."/>
            <person name="Gas S."/>
            <person name="Barry C.E. III"/>
            <person name="Tekaia F."/>
            <person name="Badcock K."/>
            <person name="Basham D."/>
            <person name="Brown D."/>
            <person name="Chillingworth T."/>
            <person name="Connor R."/>
            <person name="Davies R.M."/>
            <person name="Devlin K."/>
            <person name="Feltwell T."/>
            <person name="Gentles S."/>
            <person name="Hamlin N."/>
            <person name="Holroyd S."/>
            <person name="Hornsby T."/>
            <person name="Jagels K."/>
            <person name="Krogh A."/>
            <person name="McLean J."/>
            <person name="Moule S."/>
            <person name="Murphy L.D."/>
            <person name="Oliver S."/>
            <person name="Osborne J."/>
            <person name="Quail M.A."/>
            <person name="Rajandream M.A."/>
            <person name="Rogers J."/>
            <person name="Rutter S."/>
            <person name="Seeger K."/>
            <person name="Skelton S."/>
            <person name="Squares S."/>
            <person name="Squares R."/>
            <person name="Sulston J.E."/>
            <person name="Taylor K."/>
            <person name="Whitehead S."/>
            <person name="Barrell B.G."/>
        </authorList>
    </citation>
    <scope>NUCLEOTIDE SEQUENCE [LARGE SCALE GENOMIC DNA]</scope>
    <source>
        <strain>ATCC 25618 / H37Rv</strain>
    </source>
</reference>
<reference key="2">
    <citation type="journal article" date="2005" name="BMC Biochem.">
        <title>Comparison of Mycobacterium tuberculosis isocitrate dehydrogenases (ICD-1 and ICD-2) reveals differences in coenzyme affinity, oligomeric state, pH tolerance and phylogenetic affiliation.</title>
        <authorList>
            <person name="Banerjee S."/>
            <person name="Nandyala A."/>
            <person name="Podili R."/>
            <person name="Katoch V.M."/>
            <person name="Hasnain S.E."/>
        </authorList>
    </citation>
    <scope>FUNCTION</scope>
    <scope>CATALYTIC ACTIVITY</scope>
    <scope>COFACTOR</scope>
    <scope>BIOPHYSICOCHEMICAL PROPERTIES</scope>
    <scope>SUBUNIT</scope>
    <scope>INDUCTION</scope>
</reference>
<reference key="3">
    <citation type="journal article" date="2011" name="Mol. Cell. Proteomics">
        <title>Proteogenomic analysis of Mycobacterium tuberculosis by high resolution mass spectrometry.</title>
        <authorList>
            <person name="Kelkar D.S."/>
            <person name="Kumar D."/>
            <person name="Kumar P."/>
            <person name="Balakrishnan L."/>
            <person name="Muthusamy B."/>
            <person name="Yadav A.K."/>
            <person name="Shrivastava P."/>
            <person name="Marimuthu A."/>
            <person name="Anand S."/>
            <person name="Sundaram H."/>
            <person name="Kingsbury R."/>
            <person name="Harsha H.C."/>
            <person name="Nair B."/>
            <person name="Prasad T.S."/>
            <person name="Chauhan D.S."/>
            <person name="Katoch K."/>
            <person name="Katoch V.M."/>
            <person name="Kumar P."/>
            <person name="Chaerkady R."/>
            <person name="Ramachandran S."/>
            <person name="Dash D."/>
            <person name="Pandey A."/>
        </authorList>
    </citation>
    <scope>IDENTIFICATION BY MASS SPECTROMETRY [LARGE SCALE ANALYSIS]</scope>
    <source>
        <strain>ATCC 25618 / H37Rv</strain>
    </source>
</reference>
<reference key="4">
    <citation type="journal article" date="2008" name="Acta Crystallogr. F">
        <title>Cloning, expression, purification, crystallization and preliminary X-ray crystallographic analysis of isocitrate dehydrogenase 2 (Rv0066c) from Mycobacterium tuberculosis.</title>
        <authorList>
            <person name="Hatzopoulos G.N."/>
            <person name="Kefala G."/>
            <person name="Mueller-Dieckmann J."/>
        </authorList>
    </citation>
    <scope>SUBUNIT</scope>
    <scope>CRYSTALLIZATION</scope>
    <source>
        <strain>H37Rv</strain>
    </source>
</reference>
<reference evidence="10" key="5">
    <citation type="submission" date="2016-07" db="PDB data bank">
        <title>Structural and kinetic characterization of isocitrate dehydrogenase-2 from Mycobacterium tuberculosis.</title>
        <authorList>
            <person name="Sacchettini J.C."/>
            <person name="Cheng Y.S."/>
        </authorList>
    </citation>
    <scope>X-RAY CRYSTALLOGRAPHY (2.66 ANGSTROMS) IN COMPLEX WITH NADP(+) AND SUBSTRATE ANALOGS</scope>
</reference>
<accession>O53611</accession>
<accession>F2GPS0</accession>
<accession>I6Y6T5</accession>
<accession>Q7DAI6</accession>
<proteinExistence type="evidence at protein level"/>
<protein>
    <recommendedName>
        <fullName evidence="6">Isocitrate dehydrogenase [NADP] 2</fullName>
        <shortName evidence="6">ICD-2</shortName>
        <shortName evidence="7">IDH 2</shortName>
        <ecNumber evidence="3">1.1.1.42</ecNumber>
    </recommendedName>
    <alternativeName>
        <fullName evidence="7">Oxalosuccinate decarboxylase</fullName>
    </alternativeName>
</protein>
<comment type="function">
    <text evidence="3">Catalyzes the oxidative decarboxylation of isocitrate to 2-oxoglutarate and carbon dioxide with the concomitant reduction of NADP(+) (PubMed:16194279). Cannot use NAD(+) (PubMed:16194279).</text>
</comment>
<comment type="catalytic activity">
    <reaction evidence="3">
        <text>D-threo-isocitrate + NADP(+) = 2-oxoglutarate + CO2 + NADPH</text>
        <dbReference type="Rhea" id="RHEA:19629"/>
        <dbReference type="ChEBI" id="CHEBI:15562"/>
        <dbReference type="ChEBI" id="CHEBI:16526"/>
        <dbReference type="ChEBI" id="CHEBI:16810"/>
        <dbReference type="ChEBI" id="CHEBI:57783"/>
        <dbReference type="ChEBI" id="CHEBI:58349"/>
        <dbReference type="EC" id="1.1.1.42"/>
    </reaction>
</comment>
<comment type="cofactor">
    <cofactor evidence="3">
        <name>Mg(2+)</name>
        <dbReference type="ChEBI" id="CHEBI:18420"/>
    </cofactor>
    <text evidence="2 3">Binds 1 Mg(2+) ion per subunit (By similarity). Shows activity with Mg(2+), but not with Mn(2+), Zn(2+) or Ca(2+) (PubMed:16194279).</text>
</comment>
<comment type="biophysicochemical properties">
    <kinetics>
        <KM evidence="3">20 uM for D,L-isocitrate (in the presence of Mg(2+))</KM>
        <KM evidence="3">19.6 uM for NADP(+) (in the presence of Mg(2+))</KM>
    </kinetics>
    <phDependence>
        <text evidence="3">Optimum pH is 7.5 (PubMed:16194279). Retains only 10% of activity in acidic pH 5.5 and less than 40% in alkaline pH 9.5 (PubMed:16194279).</text>
    </phDependence>
    <temperatureDependence>
        <text evidence="3">Shows almost similar activity across a wide temperature range (20 degrees Celsius to 40 degrees Celsius) (PubMed:16194279). Retains only 5% activity at 60 degrees Celsius (PubMed:16194279).</text>
    </temperatureDependence>
</comment>
<comment type="subunit">
    <text evidence="3 4">May form homotrimers (PubMed:16194279, PubMed:19052369). Also forms homotetramers at low salt concentration, which are dissociated into homodimers, but not into monomers, at high salt concentration (1 M) (PubMed:16194279).</text>
</comment>
<comment type="induction">
    <text evidence="3">Expressed at the protein level, as evidenced by antibodies present in the sera of patients infected with tuberculosis.</text>
</comment>
<comment type="similarity">
    <text evidence="7">Belongs to the monomeric-type IDH family.</text>
</comment>
<sequence>MSAEQPTIIYTLTDEAPLLATYAFLPIVRAFAEPAGIKIEASDISVAARILAEFPDYLTEEQRVPDNLAELGRLTQLPDTNIIKLPNISASVPQLVAAIKELQDKGYAVPDYPADPKTDQEKAIKERYARCLGSAVNPVLRQGNSDRRAPKAVKEYARKHPHSMGEWSMASRTHVAHMRHGDFYAGEKSMTLDRARNVRMELLAKSGKTIVLKPEVPLDDGDVIDSMFMSKKALCDFYEEQMQDAFETGVMFSLHVKATMMKVSHPIVFGHAVRIFYKDAFAKHQELFDDLGVNVNNGLSDLYSKIESLPASQRDEIIEDLHRCHEHRPELAMVDSARGISNFHSPSDVIVDASMPAMIRAGGKMYGADGKLKDTKAVNPESTFSRIYQEIINFCKTNGQFDPTTMGTVPNVGLMAQQAEEYGSHDKTFEIPEDGVANIVDVATGEVLLTENVEAGDIWRMCIVKDAPIRDWVKLAVTRARISGMPVLFWLDPYRPHENELIKKVKTYLKDHDTEGLDIQIMSQVRSMRYTCERLVRGLDTIAATGNILRDYLTDLFPILELGTSAKMLSVVPLMAGGGMYETGAGGSAPKHVKQLVEENHLRWDSLGEFLALGAGFEDIGIKTGNERAKLLGKTLDAAIGKLLDNDKSPSRKTGELDNRGSQFYLAMYWAQELAAQTDDQQLAEHFASLADVLTKNEDVIVRELTEVQGEPVDIGGYYAPDSDMTTAVMRPSKTFNAALEAVQG</sequence>
<gene>
    <name evidence="6" type="primary">icd-2</name>
    <name evidence="9" type="synonym">icd2</name>
    <name evidence="9" type="ordered locus">Rv0066c</name>
</gene>
<keyword id="KW-0002">3D-structure</keyword>
<keyword id="KW-0329">Glyoxylate bypass</keyword>
<keyword id="KW-0460">Magnesium</keyword>
<keyword id="KW-0479">Metal-binding</keyword>
<keyword id="KW-0521">NADP</keyword>
<keyword id="KW-0560">Oxidoreductase</keyword>
<keyword id="KW-1185">Reference proteome</keyword>
<keyword id="KW-0816">Tricarboxylic acid cycle</keyword>
<evidence type="ECO:0000250" key="1">
    <source>
        <dbReference type="UniProtKB" id="P16100"/>
    </source>
</evidence>
<evidence type="ECO:0000250" key="2">
    <source>
        <dbReference type="UniProtKB" id="P50216"/>
    </source>
</evidence>
<evidence type="ECO:0000269" key="3">
    <source>
    </source>
</evidence>
<evidence type="ECO:0000269" key="4">
    <source>
    </source>
</evidence>
<evidence type="ECO:0000269" key="5">
    <source ref="5"/>
</evidence>
<evidence type="ECO:0000303" key="6">
    <source>
    </source>
</evidence>
<evidence type="ECO:0000305" key="7"/>
<evidence type="ECO:0000305" key="8">
    <source ref="5"/>
</evidence>
<evidence type="ECO:0000312" key="9">
    <source>
        <dbReference type="EMBL" id="CCP42789.1"/>
    </source>
</evidence>
<evidence type="ECO:0007744" key="10">
    <source>
        <dbReference type="PDB" id="5KVU"/>
    </source>
</evidence>
<evidence type="ECO:0007829" key="11">
    <source>
        <dbReference type="PDB" id="5KVU"/>
    </source>
</evidence>